<sequence length="217" mass="23812">MKIFIDTANVEEIRKASELGVLSGVTTNPSLIAKEGRDLKEVVEEICNIVDGPISAEVISLEYEKMIEEGRELSKLHKNIVIKIPMCEEGLKAVSVLSKEGIKTNVTLIFSSMQALLAARAGATYVSPFLGRLDDIGNPGIEVVEQIADMFKIHEIKTEIIAASVRTPMHVLEAAMAGSHIATIPYKVIIQMSKHALTDIGIEKFMKDYEKAFGENK</sequence>
<protein>
    <recommendedName>
        <fullName evidence="1">Probable transaldolase</fullName>
        <ecNumber evidence="1">2.2.1.2</ecNumber>
    </recommendedName>
</protein>
<comment type="function">
    <text evidence="1">Transaldolase is important for the balance of metabolites in the pentose-phosphate pathway.</text>
</comment>
<comment type="catalytic activity">
    <reaction evidence="1">
        <text>D-sedoheptulose 7-phosphate + D-glyceraldehyde 3-phosphate = D-erythrose 4-phosphate + beta-D-fructose 6-phosphate</text>
        <dbReference type="Rhea" id="RHEA:17053"/>
        <dbReference type="ChEBI" id="CHEBI:16897"/>
        <dbReference type="ChEBI" id="CHEBI:57483"/>
        <dbReference type="ChEBI" id="CHEBI:57634"/>
        <dbReference type="ChEBI" id="CHEBI:59776"/>
        <dbReference type="EC" id="2.2.1.2"/>
    </reaction>
</comment>
<comment type="pathway">
    <text evidence="1">Carbohydrate degradation; pentose phosphate pathway; D-glyceraldehyde 3-phosphate and beta-D-fructose 6-phosphate from D-ribose 5-phosphate and D-xylulose 5-phosphate (non-oxidative stage): step 2/3.</text>
</comment>
<comment type="subcellular location">
    <subcellularLocation>
        <location evidence="1">Cytoplasm</location>
    </subcellularLocation>
</comment>
<comment type="similarity">
    <text evidence="1">Belongs to the transaldolase family. Type 3B subfamily.</text>
</comment>
<feature type="chain" id="PRO_1000126295" description="Probable transaldolase">
    <location>
        <begin position="1"/>
        <end position="217"/>
    </location>
</feature>
<feature type="active site" description="Schiff-base intermediate with substrate" evidence="1">
    <location>
        <position position="83"/>
    </location>
</feature>
<reference key="1">
    <citation type="journal article" date="2007" name="Genome Res.">
        <title>Genome sequence of a proteolytic (Group I) Clostridium botulinum strain Hall A and comparative analysis of the clostridial genomes.</title>
        <authorList>
            <person name="Sebaihia M."/>
            <person name="Peck M.W."/>
            <person name="Minton N.P."/>
            <person name="Thomson N.R."/>
            <person name="Holden M.T.G."/>
            <person name="Mitchell W.J."/>
            <person name="Carter A.T."/>
            <person name="Bentley S.D."/>
            <person name="Mason D.R."/>
            <person name="Crossman L."/>
            <person name="Paul C.J."/>
            <person name="Ivens A."/>
            <person name="Wells-Bennik M.H.J."/>
            <person name="Davis I.J."/>
            <person name="Cerdeno-Tarraga A.M."/>
            <person name="Churcher C."/>
            <person name="Quail M.A."/>
            <person name="Chillingworth T."/>
            <person name="Feltwell T."/>
            <person name="Fraser A."/>
            <person name="Goodhead I."/>
            <person name="Hance Z."/>
            <person name="Jagels K."/>
            <person name="Larke N."/>
            <person name="Maddison M."/>
            <person name="Moule S."/>
            <person name="Mungall K."/>
            <person name="Norbertczak H."/>
            <person name="Rabbinowitsch E."/>
            <person name="Sanders M."/>
            <person name="Simmonds M."/>
            <person name="White B."/>
            <person name="Whithead S."/>
            <person name="Parkhill J."/>
        </authorList>
    </citation>
    <scope>NUCLEOTIDE SEQUENCE [LARGE SCALE GENOMIC DNA]</scope>
    <source>
        <strain>Hall / ATCC 3502 / NCTC 13319 / Type A</strain>
    </source>
</reference>
<reference key="2">
    <citation type="journal article" date="2007" name="PLoS ONE">
        <title>Analysis of the neurotoxin complex genes in Clostridium botulinum A1-A4 and B1 strains: BoNT/A3, /Ba4 and /B1 clusters are located within plasmids.</title>
        <authorList>
            <person name="Smith T.J."/>
            <person name="Hill K.K."/>
            <person name="Foley B.T."/>
            <person name="Detter J.C."/>
            <person name="Munk A.C."/>
            <person name="Bruce D.C."/>
            <person name="Doggett N.A."/>
            <person name="Smith L.A."/>
            <person name="Marks J.D."/>
            <person name="Xie G."/>
            <person name="Brettin T.S."/>
        </authorList>
    </citation>
    <scope>NUCLEOTIDE SEQUENCE [LARGE SCALE GENOMIC DNA]</scope>
    <source>
        <strain>Hall / ATCC 3502 / NCTC 13319 / Type A</strain>
    </source>
</reference>
<accession>A5I1C9</accession>
<accession>A7G332</accession>
<evidence type="ECO:0000255" key="1">
    <source>
        <dbReference type="HAMAP-Rule" id="MF_00494"/>
    </source>
</evidence>
<organism>
    <name type="scientific">Clostridium botulinum (strain Hall / ATCC 3502 / NCTC 13319 / Type A)</name>
    <dbReference type="NCBI Taxonomy" id="441771"/>
    <lineage>
        <taxon>Bacteria</taxon>
        <taxon>Bacillati</taxon>
        <taxon>Bacillota</taxon>
        <taxon>Clostridia</taxon>
        <taxon>Eubacteriales</taxon>
        <taxon>Clostridiaceae</taxon>
        <taxon>Clostridium</taxon>
    </lineage>
</organism>
<proteinExistence type="inferred from homology"/>
<dbReference type="EC" id="2.2.1.2" evidence="1"/>
<dbReference type="EMBL" id="CP000727">
    <property type="protein sequence ID" value="ABS39086.1"/>
    <property type="molecule type" value="Genomic_DNA"/>
</dbReference>
<dbReference type="EMBL" id="AM412317">
    <property type="protein sequence ID" value="CAL82841.1"/>
    <property type="molecule type" value="Genomic_DNA"/>
</dbReference>
<dbReference type="RefSeq" id="YP_001253814.1">
    <property type="nucleotide sequence ID" value="NC_009495.1"/>
</dbReference>
<dbReference type="RefSeq" id="YP_001387197.1">
    <property type="nucleotide sequence ID" value="NC_009698.1"/>
</dbReference>
<dbReference type="SMR" id="A5I1C9"/>
<dbReference type="GeneID" id="5185547"/>
<dbReference type="KEGG" id="cbh:CLC_1331"/>
<dbReference type="KEGG" id="cbo:CBO1292"/>
<dbReference type="PATRIC" id="fig|413999.7.peg.1278"/>
<dbReference type="HOGENOM" id="CLU_079764_0_0_9"/>
<dbReference type="UniPathway" id="UPA00115">
    <property type="reaction ID" value="UER00414"/>
</dbReference>
<dbReference type="PRO" id="PR:A5I1C9"/>
<dbReference type="Proteomes" id="UP000001986">
    <property type="component" value="Chromosome"/>
</dbReference>
<dbReference type="GO" id="GO:0005737">
    <property type="term" value="C:cytoplasm"/>
    <property type="evidence" value="ECO:0007669"/>
    <property type="project" value="UniProtKB-SubCell"/>
</dbReference>
<dbReference type="GO" id="GO:0016832">
    <property type="term" value="F:aldehyde-lyase activity"/>
    <property type="evidence" value="ECO:0007669"/>
    <property type="project" value="InterPro"/>
</dbReference>
<dbReference type="GO" id="GO:0004801">
    <property type="term" value="F:transaldolase activity"/>
    <property type="evidence" value="ECO:0007669"/>
    <property type="project" value="UniProtKB-UniRule"/>
</dbReference>
<dbReference type="GO" id="GO:0005975">
    <property type="term" value="P:carbohydrate metabolic process"/>
    <property type="evidence" value="ECO:0007669"/>
    <property type="project" value="InterPro"/>
</dbReference>
<dbReference type="GO" id="GO:0006098">
    <property type="term" value="P:pentose-phosphate shunt"/>
    <property type="evidence" value="ECO:0007669"/>
    <property type="project" value="UniProtKB-UniRule"/>
</dbReference>
<dbReference type="CDD" id="cd00956">
    <property type="entry name" value="Transaldolase_FSA"/>
    <property type="match status" value="1"/>
</dbReference>
<dbReference type="FunFam" id="3.20.20.70:FF:000018">
    <property type="entry name" value="Probable transaldolase"/>
    <property type="match status" value="1"/>
</dbReference>
<dbReference type="Gene3D" id="3.20.20.70">
    <property type="entry name" value="Aldolase class I"/>
    <property type="match status" value="1"/>
</dbReference>
<dbReference type="HAMAP" id="MF_00494">
    <property type="entry name" value="Transaldolase_3b"/>
    <property type="match status" value="1"/>
</dbReference>
<dbReference type="InterPro" id="IPR013785">
    <property type="entry name" value="Aldolase_TIM"/>
</dbReference>
<dbReference type="InterPro" id="IPR001585">
    <property type="entry name" value="TAL/FSA"/>
</dbReference>
<dbReference type="InterPro" id="IPR022999">
    <property type="entry name" value="Transaldolase_3B"/>
</dbReference>
<dbReference type="InterPro" id="IPR004731">
    <property type="entry name" value="Transaldolase_3B/F6P_aldolase"/>
</dbReference>
<dbReference type="InterPro" id="IPR018225">
    <property type="entry name" value="Transaldolase_AS"/>
</dbReference>
<dbReference type="InterPro" id="IPR033919">
    <property type="entry name" value="TSA/FSA_arc/bac"/>
</dbReference>
<dbReference type="NCBIfam" id="TIGR00875">
    <property type="entry name" value="fsa_talC_mipB"/>
    <property type="match status" value="1"/>
</dbReference>
<dbReference type="PANTHER" id="PTHR10683">
    <property type="entry name" value="TRANSALDOLASE"/>
    <property type="match status" value="1"/>
</dbReference>
<dbReference type="PANTHER" id="PTHR10683:SF36">
    <property type="entry name" value="TRANSALDOLASE"/>
    <property type="match status" value="1"/>
</dbReference>
<dbReference type="Pfam" id="PF00923">
    <property type="entry name" value="TAL_FSA"/>
    <property type="match status" value="1"/>
</dbReference>
<dbReference type="SUPFAM" id="SSF51569">
    <property type="entry name" value="Aldolase"/>
    <property type="match status" value="1"/>
</dbReference>
<dbReference type="PROSITE" id="PS01054">
    <property type="entry name" value="TRANSALDOLASE_1"/>
    <property type="match status" value="1"/>
</dbReference>
<dbReference type="PROSITE" id="PS00958">
    <property type="entry name" value="TRANSALDOLASE_2"/>
    <property type="match status" value="1"/>
</dbReference>
<gene>
    <name evidence="1" type="primary">tal</name>
    <name type="ordered locus">CBO1292</name>
    <name type="ordered locus">CLC_1331</name>
</gene>
<name>TAL_CLOBH</name>
<keyword id="KW-0963">Cytoplasm</keyword>
<keyword id="KW-0570">Pentose shunt</keyword>
<keyword id="KW-1185">Reference proteome</keyword>
<keyword id="KW-0704">Schiff base</keyword>
<keyword id="KW-0808">Transferase</keyword>